<keyword id="KW-0119">Carbohydrate metabolism</keyword>
<keyword id="KW-0963">Cytoplasm</keyword>
<keyword id="KW-0378">Hydrolase</keyword>
<keyword id="KW-0460">Magnesium</keyword>
<keyword id="KW-0479">Metal-binding</keyword>
<keyword id="KW-1185">Reference proteome</keyword>
<reference key="1">
    <citation type="journal article" date="2001" name="Proc. Natl. Acad. Sci. U.S.A.">
        <title>Complete genome sequence of Caulobacter crescentus.</title>
        <authorList>
            <person name="Nierman W.C."/>
            <person name="Feldblyum T.V."/>
            <person name="Laub M.T."/>
            <person name="Paulsen I.T."/>
            <person name="Nelson K.E."/>
            <person name="Eisen J.A."/>
            <person name="Heidelberg J.F."/>
            <person name="Alley M.R.K."/>
            <person name="Ohta N."/>
            <person name="Maddock J.R."/>
            <person name="Potocka I."/>
            <person name="Nelson W.C."/>
            <person name="Newton A."/>
            <person name="Stephens C."/>
            <person name="Phadke N.D."/>
            <person name="Ely B."/>
            <person name="DeBoy R.T."/>
            <person name="Dodson R.J."/>
            <person name="Durkin A.S."/>
            <person name="Gwinn M.L."/>
            <person name="Haft D.H."/>
            <person name="Kolonay J.F."/>
            <person name="Smit J."/>
            <person name="Craven M.B."/>
            <person name="Khouri H.M."/>
            <person name="Shetty J."/>
            <person name="Berry K.J."/>
            <person name="Utterback T.R."/>
            <person name="Tran K."/>
            <person name="Wolf A.M."/>
            <person name="Vamathevan J.J."/>
            <person name="Ermolaeva M.D."/>
            <person name="White O."/>
            <person name="Salzberg S.L."/>
            <person name="Venter J.C."/>
            <person name="Shapiro L."/>
            <person name="Fraser C.M."/>
        </authorList>
    </citation>
    <scope>NUCLEOTIDE SEQUENCE [LARGE SCALE GENOMIC DNA]</scope>
    <source>
        <strain>ATCC 19089 / CIP 103742 / CB 15</strain>
    </source>
</reference>
<name>F16PA_CAUVC</name>
<protein>
    <recommendedName>
        <fullName evidence="1">Fructose-1,6-bisphosphatase class 1</fullName>
        <shortName evidence="1">FBPase class 1</shortName>
        <ecNumber evidence="1">3.1.3.11</ecNumber>
    </recommendedName>
    <alternativeName>
        <fullName evidence="1">D-fructose-1,6-bisphosphate 1-phosphohydrolase class 1</fullName>
    </alternativeName>
</protein>
<evidence type="ECO:0000255" key="1">
    <source>
        <dbReference type="HAMAP-Rule" id="MF_01855"/>
    </source>
</evidence>
<gene>
    <name evidence="1" type="primary">fbp</name>
    <name type="ordered locus">CC_1385</name>
</gene>
<accession>Q9A8G9</accession>
<proteinExistence type="inferred from homology"/>
<feature type="chain" id="PRO_0000364517" description="Fructose-1,6-bisphosphatase class 1">
    <location>
        <begin position="1"/>
        <end position="336"/>
    </location>
</feature>
<feature type="binding site" evidence="1">
    <location>
        <position position="98"/>
    </location>
    <ligand>
        <name>Mg(2+)</name>
        <dbReference type="ChEBI" id="CHEBI:18420"/>
        <label>1</label>
    </ligand>
</feature>
<feature type="binding site" evidence="1">
    <location>
        <position position="117"/>
    </location>
    <ligand>
        <name>Mg(2+)</name>
        <dbReference type="ChEBI" id="CHEBI:18420"/>
        <label>1</label>
    </ligand>
</feature>
<feature type="binding site" evidence="1">
    <location>
        <position position="117"/>
    </location>
    <ligand>
        <name>Mg(2+)</name>
        <dbReference type="ChEBI" id="CHEBI:18420"/>
        <label>2</label>
    </ligand>
</feature>
<feature type="binding site" evidence="1">
    <location>
        <position position="119"/>
    </location>
    <ligand>
        <name>Mg(2+)</name>
        <dbReference type="ChEBI" id="CHEBI:18420"/>
        <label>1</label>
    </ligand>
</feature>
<feature type="binding site" evidence="1">
    <location>
        <begin position="120"/>
        <end position="123"/>
    </location>
    <ligand>
        <name>substrate</name>
    </ligand>
</feature>
<feature type="binding site" evidence="1">
    <location>
        <position position="120"/>
    </location>
    <ligand>
        <name>Mg(2+)</name>
        <dbReference type="ChEBI" id="CHEBI:18420"/>
        <label>2</label>
    </ligand>
</feature>
<feature type="binding site" evidence="1">
    <location>
        <position position="210"/>
    </location>
    <ligand>
        <name>substrate</name>
    </ligand>
</feature>
<feature type="binding site" evidence="1">
    <location>
        <position position="276"/>
    </location>
    <ligand>
        <name>substrate</name>
    </ligand>
</feature>
<feature type="binding site" evidence="1">
    <location>
        <position position="282"/>
    </location>
    <ligand>
        <name>Mg(2+)</name>
        <dbReference type="ChEBI" id="CHEBI:18420"/>
        <label>2</label>
    </ligand>
</feature>
<dbReference type="EC" id="3.1.3.11" evidence="1"/>
<dbReference type="EMBL" id="AE005673">
    <property type="protein sequence ID" value="AAK23366.1"/>
    <property type="molecule type" value="Genomic_DNA"/>
</dbReference>
<dbReference type="PIR" id="B87421">
    <property type="entry name" value="B87421"/>
</dbReference>
<dbReference type="RefSeq" id="NP_420198.1">
    <property type="nucleotide sequence ID" value="NC_002696.2"/>
</dbReference>
<dbReference type="SMR" id="Q9A8G9"/>
<dbReference type="STRING" id="190650.CC_1385"/>
<dbReference type="EnsemblBacteria" id="AAK23366">
    <property type="protein sequence ID" value="AAK23366"/>
    <property type="gene ID" value="CC_1385"/>
</dbReference>
<dbReference type="KEGG" id="ccr:CC_1385"/>
<dbReference type="PATRIC" id="fig|190650.5.peg.1415"/>
<dbReference type="eggNOG" id="COG0158">
    <property type="taxonomic scope" value="Bacteria"/>
</dbReference>
<dbReference type="HOGENOM" id="CLU_039977_0_0_5"/>
<dbReference type="BioCyc" id="CAULO:CC1385-MONOMER"/>
<dbReference type="UniPathway" id="UPA00138"/>
<dbReference type="Proteomes" id="UP000001816">
    <property type="component" value="Chromosome"/>
</dbReference>
<dbReference type="GO" id="GO:0005829">
    <property type="term" value="C:cytosol"/>
    <property type="evidence" value="ECO:0007669"/>
    <property type="project" value="TreeGrafter"/>
</dbReference>
<dbReference type="GO" id="GO:0042132">
    <property type="term" value="F:fructose 1,6-bisphosphate 1-phosphatase activity"/>
    <property type="evidence" value="ECO:0007669"/>
    <property type="project" value="UniProtKB-UniRule"/>
</dbReference>
<dbReference type="GO" id="GO:0000287">
    <property type="term" value="F:magnesium ion binding"/>
    <property type="evidence" value="ECO:0007669"/>
    <property type="project" value="UniProtKB-UniRule"/>
</dbReference>
<dbReference type="GO" id="GO:0030388">
    <property type="term" value="P:fructose 1,6-bisphosphate metabolic process"/>
    <property type="evidence" value="ECO:0007669"/>
    <property type="project" value="TreeGrafter"/>
</dbReference>
<dbReference type="GO" id="GO:0006002">
    <property type="term" value="P:fructose 6-phosphate metabolic process"/>
    <property type="evidence" value="ECO:0007669"/>
    <property type="project" value="TreeGrafter"/>
</dbReference>
<dbReference type="GO" id="GO:0006000">
    <property type="term" value="P:fructose metabolic process"/>
    <property type="evidence" value="ECO:0007669"/>
    <property type="project" value="TreeGrafter"/>
</dbReference>
<dbReference type="GO" id="GO:0006094">
    <property type="term" value="P:gluconeogenesis"/>
    <property type="evidence" value="ECO:0007669"/>
    <property type="project" value="UniProtKB-UniRule"/>
</dbReference>
<dbReference type="GO" id="GO:0005986">
    <property type="term" value="P:sucrose biosynthetic process"/>
    <property type="evidence" value="ECO:0007669"/>
    <property type="project" value="TreeGrafter"/>
</dbReference>
<dbReference type="CDD" id="cd00354">
    <property type="entry name" value="FBPase"/>
    <property type="match status" value="1"/>
</dbReference>
<dbReference type="FunFam" id="3.40.190.80:FF:000011">
    <property type="entry name" value="Fructose-1,6-bisphosphatase class 1"/>
    <property type="match status" value="1"/>
</dbReference>
<dbReference type="Gene3D" id="3.40.190.80">
    <property type="match status" value="1"/>
</dbReference>
<dbReference type="Gene3D" id="3.30.540.10">
    <property type="entry name" value="Fructose-1,6-Bisphosphatase, subunit A, domain 1"/>
    <property type="match status" value="1"/>
</dbReference>
<dbReference type="HAMAP" id="MF_01855">
    <property type="entry name" value="FBPase_class1"/>
    <property type="match status" value="1"/>
</dbReference>
<dbReference type="InterPro" id="IPR044015">
    <property type="entry name" value="FBPase_C_dom"/>
</dbReference>
<dbReference type="InterPro" id="IPR000146">
    <property type="entry name" value="FBPase_class-1"/>
</dbReference>
<dbReference type="InterPro" id="IPR033391">
    <property type="entry name" value="FBPase_N"/>
</dbReference>
<dbReference type="InterPro" id="IPR028343">
    <property type="entry name" value="FBPtase"/>
</dbReference>
<dbReference type="NCBIfam" id="NF006779">
    <property type="entry name" value="PRK09293.1-3"/>
    <property type="match status" value="1"/>
</dbReference>
<dbReference type="NCBIfam" id="NF006780">
    <property type="entry name" value="PRK09293.1-4"/>
    <property type="match status" value="1"/>
</dbReference>
<dbReference type="PANTHER" id="PTHR11556">
    <property type="entry name" value="FRUCTOSE-1,6-BISPHOSPHATASE-RELATED"/>
    <property type="match status" value="1"/>
</dbReference>
<dbReference type="PANTHER" id="PTHR11556:SF35">
    <property type="entry name" value="SEDOHEPTULOSE-1,7-BISPHOSPHATASE, CHLOROPLASTIC"/>
    <property type="match status" value="1"/>
</dbReference>
<dbReference type="Pfam" id="PF00316">
    <property type="entry name" value="FBPase"/>
    <property type="match status" value="1"/>
</dbReference>
<dbReference type="Pfam" id="PF18913">
    <property type="entry name" value="FBPase_C"/>
    <property type="match status" value="1"/>
</dbReference>
<dbReference type="PIRSF" id="PIRSF500210">
    <property type="entry name" value="FBPtase"/>
    <property type="match status" value="1"/>
</dbReference>
<dbReference type="PIRSF" id="PIRSF000904">
    <property type="entry name" value="FBPtase_SBPase"/>
    <property type="match status" value="1"/>
</dbReference>
<dbReference type="PRINTS" id="PR00115">
    <property type="entry name" value="F16BPHPHTASE"/>
</dbReference>
<dbReference type="SUPFAM" id="SSF56655">
    <property type="entry name" value="Carbohydrate phosphatase"/>
    <property type="match status" value="1"/>
</dbReference>
<comment type="catalytic activity">
    <reaction evidence="1">
        <text>beta-D-fructose 1,6-bisphosphate + H2O = beta-D-fructose 6-phosphate + phosphate</text>
        <dbReference type="Rhea" id="RHEA:11064"/>
        <dbReference type="ChEBI" id="CHEBI:15377"/>
        <dbReference type="ChEBI" id="CHEBI:32966"/>
        <dbReference type="ChEBI" id="CHEBI:43474"/>
        <dbReference type="ChEBI" id="CHEBI:57634"/>
        <dbReference type="EC" id="3.1.3.11"/>
    </reaction>
</comment>
<comment type="cofactor">
    <cofactor evidence="1">
        <name>Mg(2+)</name>
        <dbReference type="ChEBI" id="CHEBI:18420"/>
    </cofactor>
    <text evidence="1">Binds 2 magnesium ions per subunit.</text>
</comment>
<comment type="pathway">
    <text evidence="1">Carbohydrate biosynthesis; gluconeogenesis.</text>
</comment>
<comment type="subunit">
    <text evidence="1">Homotetramer.</text>
</comment>
<comment type="subcellular location">
    <subcellularLocation>
        <location evidence="1">Cytoplasm</location>
    </subcellularLocation>
</comment>
<comment type="similarity">
    <text evidence="1">Belongs to the FBPase class 1 family.</text>
</comment>
<sequence>MGRSAFGSRTRMTAFVDLAARLAAEPADAALKDVVLTIAETCAQISRVVASGALSGSLGAAGSTNVQDEEQKKLDVITNDMLSDALKACGPVAGLASEELEEVEPTGRVGGYLVTFDPLDGSSNIDVNVSVGTIFSVLPAPAGHAPTEGDFLQPGRNQVAAGYAVYGPQTMLVVTLSGGVNGFTLSADGRWLLTHPDLAIKPDTAEFAINMSNQRHWAPAVRRYIDGCLQGKDGARGKNFNMRWVASMVADVHRIMMRGGVFMYPWDAREPDKPGKLRLMYEANPMSLLAERAGGKSIEGLNEILDINPAKLHQRVPVVLGSANEVEVIRAEMRAG</sequence>
<organism>
    <name type="scientific">Caulobacter vibrioides (strain ATCC 19089 / CIP 103742 / CB 15)</name>
    <name type="common">Caulobacter crescentus</name>
    <dbReference type="NCBI Taxonomy" id="190650"/>
    <lineage>
        <taxon>Bacteria</taxon>
        <taxon>Pseudomonadati</taxon>
        <taxon>Pseudomonadota</taxon>
        <taxon>Alphaproteobacteria</taxon>
        <taxon>Caulobacterales</taxon>
        <taxon>Caulobacteraceae</taxon>
        <taxon>Caulobacter</taxon>
    </lineage>
</organism>